<evidence type="ECO:0000250" key="1">
    <source>
        <dbReference type="UniProtKB" id="Q6AZR2"/>
    </source>
</evidence>
<evidence type="ECO:0000250" key="2">
    <source>
        <dbReference type="UniProtKB" id="Q8BGK2"/>
    </source>
</evidence>
<evidence type="ECO:0000305" key="3"/>
<proteinExistence type="evidence at transcript level"/>
<feature type="chain" id="PRO_0000277605" description="Inactive ADP-ribosyltransferase ARH2">
    <location>
        <begin position="1"/>
        <end position="354"/>
    </location>
</feature>
<feature type="modified residue" description="Phosphoserine" evidence="2">
    <location>
        <position position="27"/>
    </location>
</feature>
<protein>
    <recommendedName>
        <fullName evidence="3">Inactive ADP-ribosyltransferase ARH2</fullName>
    </recommendedName>
    <alternativeName>
        <fullName evidence="3">ADP-ribosylhydrolase-like protein 1</fullName>
    </alternativeName>
    <alternativeName>
        <fullName>[Protein ADP-ribosylarginine] hydrolase-like protein 1</fullName>
    </alternativeName>
</protein>
<name>ARHL1_BOVIN</name>
<reference key="1">
    <citation type="submission" date="2005-08" db="EMBL/GenBank/DDBJ databases">
        <authorList>
            <consortium name="NIH - Mammalian Gene Collection (MGC) project"/>
        </authorList>
    </citation>
    <scope>NUCLEOTIDE SEQUENCE [LARGE SCALE MRNA]</scope>
    <source>
        <strain>Hereford</strain>
        <tissue>Heart ventricle</tissue>
    </source>
</reference>
<comment type="function">
    <text evidence="1 2">Required for myofibril assembly and outgrowth of the cardiac chambers in the developing heart (By similarity). Appears to be catalytically inactive, showing no activity against O-acetyl-ADP-ribose (By similarity).</text>
</comment>
<comment type="subcellular location">
    <subcellularLocation>
        <location evidence="1">Cytoplasm</location>
        <location evidence="1">Myofibril</location>
        <location evidence="1">Sarcomere</location>
    </subcellularLocation>
</comment>
<comment type="similarity">
    <text evidence="3">Belongs to the ADP-ribosylglycohydrolase family.</text>
</comment>
<comment type="caution">
    <text evidence="1">Although it belongs to the ADP-ribosylglycohydrolase family, lacks the metal-binding and substrate-binding residues, suggesting that it has no hydrolase activity.</text>
</comment>
<sequence>MEKFQAAMLLGAVGDALGFGHAARESSSLGARVQEEMGKGGGLDHLVLSPETWPVSDNTIMHMSTAGALITDFWCLDDLYREMVRRYVDVLEKLPEQRADPATLEGCSQLKPDNYLLAWHTPFNEKGSGFGAATKAMCVGMRYWQPERLETLVEVSVECGRMTHNHPTGFLGSLCTALFASYAVQGKRLEQWGRDMLRTVPLAEEYCKKTIRHLAEYQEHWFYFEAKWQFYLEERKIIEDTENEASFPDRYDAEEREKTYRKWSSEGRGGRRGHDAPMIAYDALLGAKGSWTELCRRAMFHGGESGATGAIAGCLFGLLHGLDAVPAGLYRELEHQDELRRLGEALHRLSSQEK</sequence>
<accession>Q3ZBM1</accession>
<organism>
    <name type="scientific">Bos taurus</name>
    <name type="common">Bovine</name>
    <dbReference type="NCBI Taxonomy" id="9913"/>
    <lineage>
        <taxon>Eukaryota</taxon>
        <taxon>Metazoa</taxon>
        <taxon>Chordata</taxon>
        <taxon>Craniata</taxon>
        <taxon>Vertebrata</taxon>
        <taxon>Euteleostomi</taxon>
        <taxon>Mammalia</taxon>
        <taxon>Eutheria</taxon>
        <taxon>Laurasiatheria</taxon>
        <taxon>Artiodactyla</taxon>
        <taxon>Ruminantia</taxon>
        <taxon>Pecora</taxon>
        <taxon>Bovidae</taxon>
        <taxon>Bovinae</taxon>
        <taxon>Bos</taxon>
    </lineage>
</organism>
<gene>
    <name type="primary">ADPRHL1</name>
    <name type="synonym">ARH2</name>
</gene>
<dbReference type="EMBL" id="BC103222">
    <property type="protein sequence ID" value="AAI03223.1"/>
    <property type="molecule type" value="mRNA"/>
</dbReference>
<dbReference type="RefSeq" id="NP_001029706.1">
    <property type="nucleotide sequence ID" value="NM_001034534.1"/>
</dbReference>
<dbReference type="RefSeq" id="XP_059748329.1">
    <property type="nucleotide sequence ID" value="XM_059892346.1"/>
</dbReference>
<dbReference type="SMR" id="Q3ZBM1"/>
<dbReference type="FunCoup" id="Q3ZBM1">
    <property type="interactions" value="50"/>
</dbReference>
<dbReference type="STRING" id="9913.ENSBTAP00000035177"/>
<dbReference type="PaxDb" id="9913-ENSBTAP00000035177"/>
<dbReference type="Ensembl" id="ENSBTAT00000035299.4">
    <property type="protein sequence ID" value="ENSBTAP00000035177.2"/>
    <property type="gene ID" value="ENSBTAG00000020928.5"/>
</dbReference>
<dbReference type="GeneID" id="519627"/>
<dbReference type="VEuPathDB" id="HostDB:ENSBTAG00000020928"/>
<dbReference type="eggNOG" id="ENOG502QPMI">
    <property type="taxonomic scope" value="Eukaryota"/>
</dbReference>
<dbReference type="GeneTree" id="ENSGT00530000063627"/>
<dbReference type="HOGENOM" id="CLU_047061_0_0_1"/>
<dbReference type="InParanoid" id="Q3ZBM1"/>
<dbReference type="OMA" id="LVTDFWC"/>
<dbReference type="OrthoDB" id="10250509at2759"/>
<dbReference type="TreeFam" id="TF329417"/>
<dbReference type="Proteomes" id="UP000009136">
    <property type="component" value="Chromosome 12"/>
</dbReference>
<dbReference type="Bgee" id="ENSBTAG00000020928">
    <property type="expression patterns" value="Expressed in tongue muscle and 59 other cell types or tissues"/>
</dbReference>
<dbReference type="GO" id="GO:0030017">
    <property type="term" value="C:sarcomere"/>
    <property type="evidence" value="ECO:0000250"/>
    <property type="project" value="UniProtKB"/>
</dbReference>
<dbReference type="GO" id="GO:0003875">
    <property type="term" value="F:ADP-ribosylarginine hydrolase activity"/>
    <property type="evidence" value="ECO:0007669"/>
    <property type="project" value="InterPro"/>
</dbReference>
<dbReference type="GO" id="GO:0000287">
    <property type="term" value="F:magnesium ion binding"/>
    <property type="evidence" value="ECO:0007669"/>
    <property type="project" value="InterPro"/>
</dbReference>
<dbReference type="GO" id="GO:0003242">
    <property type="term" value="P:cardiac chamber ballooning"/>
    <property type="evidence" value="ECO:0000250"/>
    <property type="project" value="UniProtKB"/>
</dbReference>
<dbReference type="GO" id="GO:0055003">
    <property type="term" value="P:cardiac myofibril assembly"/>
    <property type="evidence" value="ECO:0000250"/>
    <property type="project" value="UniProtKB"/>
</dbReference>
<dbReference type="GO" id="GO:0051725">
    <property type="term" value="P:protein de-ADP-ribosylation"/>
    <property type="evidence" value="ECO:0007669"/>
    <property type="project" value="InterPro"/>
</dbReference>
<dbReference type="FunFam" id="1.10.4080.10:FF:000002">
    <property type="entry name" value="ADP-ribosylarginine hydrolase isoform X1"/>
    <property type="match status" value="1"/>
</dbReference>
<dbReference type="Gene3D" id="1.10.4080.10">
    <property type="entry name" value="ADP-ribosylation/Crystallin J1"/>
    <property type="match status" value="1"/>
</dbReference>
<dbReference type="InterPro" id="IPR012108">
    <property type="entry name" value="ADP-ribosylarg_hydro"/>
</dbReference>
<dbReference type="InterPro" id="IPR050792">
    <property type="entry name" value="ADP-ribosylglycohydrolase"/>
</dbReference>
<dbReference type="InterPro" id="IPR005502">
    <property type="entry name" value="Ribosyl_crysJ1"/>
</dbReference>
<dbReference type="InterPro" id="IPR036705">
    <property type="entry name" value="Ribosyl_crysJ1_sf"/>
</dbReference>
<dbReference type="PANTHER" id="PTHR16222">
    <property type="entry name" value="ADP-RIBOSYLGLYCOHYDROLASE"/>
    <property type="match status" value="1"/>
</dbReference>
<dbReference type="PANTHER" id="PTHR16222:SF23">
    <property type="entry name" value="INACTIVE ADP-RIBOSYLTRANSFERASE ARH2"/>
    <property type="match status" value="1"/>
</dbReference>
<dbReference type="Pfam" id="PF03747">
    <property type="entry name" value="ADP_ribosyl_GH"/>
    <property type="match status" value="1"/>
</dbReference>
<dbReference type="PIRSF" id="PIRSF016939">
    <property type="entry name" value="ADP_ribslarg_hdr"/>
    <property type="match status" value="1"/>
</dbReference>
<dbReference type="SUPFAM" id="SSF101478">
    <property type="entry name" value="ADP-ribosylglycohydrolase"/>
    <property type="match status" value="1"/>
</dbReference>
<keyword id="KW-0963">Cytoplasm</keyword>
<keyword id="KW-0597">Phosphoprotein</keyword>
<keyword id="KW-1185">Reference proteome</keyword>